<comment type="function">
    <text evidence="1">Participates actively in the response to hyperosmotic and heat shock by preventing the aggregation of stress-denatured proteins, in association with DnaK and GrpE. It is the nucleotide exchange factor for DnaK and may function as a thermosensor. Unfolded proteins bind initially to DnaJ; upon interaction with the DnaJ-bound protein, DnaK hydrolyzes its bound ATP, resulting in the formation of a stable complex. GrpE releases ADP from DnaK; ATP binding to DnaK triggers the release of the substrate protein, thus completing the reaction cycle. Several rounds of ATP-dependent interactions between DnaJ, DnaK and GrpE are required for fully efficient folding.</text>
</comment>
<comment type="subunit">
    <text evidence="1">Homodimer.</text>
</comment>
<comment type="subcellular location">
    <subcellularLocation>
        <location evidence="1">Cytoplasm</location>
    </subcellularLocation>
</comment>
<comment type="similarity">
    <text evidence="1">Belongs to the GrpE family.</text>
</comment>
<keyword id="KW-0143">Chaperone</keyword>
<keyword id="KW-0963">Cytoplasm</keyword>
<keyword id="KW-0346">Stress response</keyword>
<proteinExistence type="inferred from homology"/>
<feature type="chain" id="PRO_0000113804" description="Protein GrpE">
    <location>
        <begin position="1"/>
        <end position="199"/>
    </location>
</feature>
<feature type="region of interest" description="Disordered" evidence="2">
    <location>
        <begin position="1"/>
        <end position="52"/>
    </location>
</feature>
<feature type="compositionally biased region" description="Basic and acidic residues" evidence="2">
    <location>
        <begin position="1"/>
        <end position="24"/>
    </location>
</feature>
<gene>
    <name evidence="1" type="primary">grpE</name>
</gene>
<reference key="1">
    <citation type="journal article" date="1997" name="Gene">
        <title>Cloning and sequencing of the dnaK and grpE genes of Legionella pneumophila.</title>
        <authorList>
            <person name="Amemura-Maekawa J."/>
            <person name="Watanabe H."/>
        </authorList>
    </citation>
    <scope>NUCLEOTIDE SEQUENCE [GENOMIC DNA]</scope>
    <source>
        <strain>AM511</strain>
    </source>
</reference>
<protein>
    <recommendedName>
        <fullName evidence="1">Protein GrpE</fullName>
    </recommendedName>
    <alternativeName>
        <fullName evidence="1">HSP-70 cofactor</fullName>
    </alternativeName>
</protein>
<evidence type="ECO:0000255" key="1">
    <source>
        <dbReference type="HAMAP-Rule" id="MF_01151"/>
    </source>
</evidence>
<evidence type="ECO:0000256" key="2">
    <source>
        <dbReference type="SAM" id="MobiDB-lite"/>
    </source>
</evidence>
<dbReference type="EMBL" id="D89498">
    <property type="protein sequence ID" value="BAA22782.1"/>
    <property type="molecule type" value="Genomic_DNA"/>
</dbReference>
<dbReference type="RefSeq" id="WP_015444334.1">
    <property type="nucleotide sequence ID" value="NZ_UGOV01000002.1"/>
</dbReference>
<dbReference type="SMR" id="O32481"/>
<dbReference type="STRING" id="91892.BIZ52_09935"/>
<dbReference type="GeneID" id="57036020"/>
<dbReference type="eggNOG" id="COG0576">
    <property type="taxonomic scope" value="Bacteria"/>
</dbReference>
<dbReference type="GO" id="GO:0005829">
    <property type="term" value="C:cytosol"/>
    <property type="evidence" value="ECO:0007669"/>
    <property type="project" value="TreeGrafter"/>
</dbReference>
<dbReference type="GO" id="GO:0000774">
    <property type="term" value="F:adenyl-nucleotide exchange factor activity"/>
    <property type="evidence" value="ECO:0007669"/>
    <property type="project" value="InterPro"/>
</dbReference>
<dbReference type="GO" id="GO:0042803">
    <property type="term" value="F:protein homodimerization activity"/>
    <property type="evidence" value="ECO:0007669"/>
    <property type="project" value="InterPro"/>
</dbReference>
<dbReference type="GO" id="GO:0051087">
    <property type="term" value="F:protein-folding chaperone binding"/>
    <property type="evidence" value="ECO:0007669"/>
    <property type="project" value="InterPro"/>
</dbReference>
<dbReference type="GO" id="GO:0051082">
    <property type="term" value="F:unfolded protein binding"/>
    <property type="evidence" value="ECO:0007669"/>
    <property type="project" value="TreeGrafter"/>
</dbReference>
<dbReference type="GO" id="GO:0006457">
    <property type="term" value="P:protein folding"/>
    <property type="evidence" value="ECO:0007669"/>
    <property type="project" value="InterPro"/>
</dbReference>
<dbReference type="CDD" id="cd00446">
    <property type="entry name" value="GrpE"/>
    <property type="match status" value="1"/>
</dbReference>
<dbReference type="FunFam" id="2.30.22.10:FF:000001">
    <property type="entry name" value="Protein GrpE"/>
    <property type="match status" value="1"/>
</dbReference>
<dbReference type="Gene3D" id="3.90.20.20">
    <property type="match status" value="1"/>
</dbReference>
<dbReference type="Gene3D" id="2.30.22.10">
    <property type="entry name" value="Head domain of nucleotide exchange factor GrpE"/>
    <property type="match status" value="1"/>
</dbReference>
<dbReference type="HAMAP" id="MF_01151">
    <property type="entry name" value="GrpE"/>
    <property type="match status" value="1"/>
</dbReference>
<dbReference type="InterPro" id="IPR000740">
    <property type="entry name" value="GrpE"/>
</dbReference>
<dbReference type="InterPro" id="IPR013805">
    <property type="entry name" value="GrpE_coiled_coil"/>
</dbReference>
<dbReference type="InterPro" id="IPR009012">
    <property type="entry name" value="GrpE_head"/>
</dbReference>
<dbReference type="NCBIfam" id="NF010737">
    <property type="entry name" value="PRK14139.1"/>
    <property type="match status" value="1"/>
</dbReference>
<dbReference type="NCBIfam" id="NF010738">
    <property type="entry name" value="PRK14140.1"/>
    <property type="match status" value="1"/>
</dbReference>
<dbReference type="NCBIfam" id="NF010742">
    <property type="entry name" value="PRK14144.1"/>
    <property type="match status" value="1"/>
</dbReference>
<dbReference type="NCBIfam" id="NF010748">
    <property type="entry name" value="PRK14150.1"/>
    <property type="match status" value="1"/>
</dbReference>
<dbReference type="PANTHER" id="PTHR21237">
    <property type="entry name" value="GRPE PROTEIN"/>
    <property type="match status" value="1"/>
</dbReference>
<dbReference type="PANTHER" id="PTHR21237:SF23">
    <property type="entry name" value="GRPE PROTEIN HOMOLOG, MITOCHONDRIAL"/>
    <property type="match status" value="1"/>
</dbReference>
<dbReference type="Pfam" id="PF01025">
    <property type="entry name" value="GrpE"/>
    <property type="match status" value="1"/>
</dbReference>
<dbReference type="PRINTS" id="PR00773">
    <property type="entry name" value="GRPEPROTEIN"/>
</dbReference>
<dbReference type="SUPFAM" id="SSF58014">
    <property type="entry name" value="Coiled-coil domain of nucleotide exchange factor GrpE"/>
    <property type="match status" value="1"/>
</dbReference>
<dbReference type="SUPFAM" id="SSF51064">
    <property type="entry name" value="Head domain of nucleotide exchange factor GrpE"/>
    <property type="match status" value="1"/>
</dbReference>
<dbReference type="PROSITE" id="PS01071">
    <property type="entry name" value="GRPE"/>
    <property type="match status" value="1"/>
</dbReference>
<sequence length="199" mass="22804">MSKQNKKDWKKFKDEHKEEHKVENEILEEETDEESQHQEPALGHPSYTALEEQLTLAEQKAHENWEKSVRALAELENVRRRMEREVANAHKYGVEKLISALLPVVDSLEQALQLADKNSDPSMHEGLELTMKLFLDALQKFDVEQIDPLGQTFDPQQHEAMSMQPAPGAPPNSVITVFQKGYKLSDRVIRPARVIVSTK</sequence>
<organism>
    <name type="scientific">Legionella pneumophila</name>
    <dbReference type="NCBI Taxonomy" id="446"/>
    <lineage>
        <taxon>Bacteria</taxon>
        <taxon>Pseudomonadati</taxon>
        <taxon>Pseudomonadota</taxon>
        <taxon>Gammaproteobacteria</taxon>
        <taxon>Legionellales</taxon>
        <taxon>Legionellaceae</taxon>
        <taxon>Legionella</taxon>
    </lineage>
</organism>
<name>GRPE_LEGPN</name>
<accession>O32481</accession>